<proteinExistence type="evidence at transcript level"/>
<sequence length="512" mass="58923">MENLFIFLFALLLFCFMLLKLSKKYSALKLPPGPRPLPIIGNLHQIGGGLMHHILREMARTYGPLFRIKFGQVSTIVVSSPEIAKEIFRTHDVVFSYRPQNIAVFNVMTYNFSNIAFAPYGNYWRQMRKICVMEILGASRVRSFGSIRQEEVMNLIRFVGSHKGKLVNVSEKIYGLTYSITARAAFGKVSKYQQVFKEHMDKYDDLARGLDIADFYPSMKFLRLVTGMERKLKVMFKEVDEILQVIIDEHRDQRMKKIRSKVDDNEKEEEEGNEDIVDVLMNLQQSGQTELPVTDDNIKAVILDIFGAGGDTTAATLEWALAESLKNKQVLKRAQEELRTIFHSKRNVDESGFNQLKYLPAIVKETLRLHPPAPLSLPRECSEECNIYGYDIPAKTRVMVNIWAMGRDPKYWSEPEEFKPERFIDSRIDYKGNDFEYIPFGAGRRICPGMSFAIPNVALPLAQLLFHFDWKVDDDAGKLEDLDMVEHPVLEARRKNELKLIPVIYEGSCLKN</sequence>
<gene>
    <name evidence="4" type="primary">CYP71BT1</name>
    <name evidence="5" type="synonym">CYP71B34</name>
    <name evidence="5" type="ORF">Caros004638</name>
</gene>
<keyword id="KW-0325">Glycoprotein</keyword>
<keyword id="KW-0349">Heme</keyword>
<keyword id="KW-0408">Iron</keyword>
<keyword id="KW-0479">Metal-binding</keyword>
<keyword id="KW-0503">Monooxygenase</keyword>
<keyword id="KW-0560">Oxidoreductase</keyword>
<keyword id="KW-0732">Signal</keyword>
<organism>
    <name type="scientific">Catharanthus roseus</name>
    <name type="common">Madagascar periwinkle</name>
    <name type="synonym">Vinca rosea</name>
    <dbReference type="NCBI Taxonomy" id="4058"/>
    <lineage>
        <taxon>Eukaryota</taxon>
        <taxon>Viridiplantae</taxon>
        <taxon>Streptophyta</taxon>
        <taxon>Embryophyta</taxon>
        <taxon>Tracheophyta</taxon>
        <taxon>Spermatophyta</taxon>
        <taxon>Magnoliopsida</taxon>
        <taxon>eudicotyledons</taxon>
        <taxon>Gunneridae</taxon>
        <taxon>Pentapetalae</taxon>
        <taxon>asterids</taxon>
        <taxon>lamiids</taxon>
        <taxon>Gentianales</taxon>
        <taxon>Apocynaceae</taxon>
        <taxon>Rauvolfioideae</taxon>
        <taxon>Vinceae</taxon>
        <taxon>Catharanthinae</taxon>
        <taxon>Catharanthus</taxon>
    </lineage>
</organism>
<dbReference type="EC" id="1.14.-.-" evidence="5"/>
<dbReference type="EMBL" id="KF302073">
    <property type="protein sequence ID" value="AHK60840.1"/>
    <property type="molecule type" value="mRNA"/>
</dbReference>
<dbReference type="SMR" id="W8JCE8"/>
<dbReference type="GlyCosmos" id="W8JCE8">
    <property type="glycosylation" value="2 sites, No reported glycans"/>
</dbReference>
<dbReference type="OrthoDB" id="2789670at2759"/>
<dbReference type="GO" id="GO:0020037">
    <property type="term" value="F:heme binding"/>
    <property type="evidence" value="ECO:0007669"/>
    <property type="project" value="InterPro"/>
</dbReference>
<dbReference type="GO" id="GO:0005506">
    <property type="term" value="F:iron ion binding"/>
    <property type="evidence" value="ECO:0007669"/>
    <property type="project" value="InterPro"/>
</dbReference>
<dbReference type="GO" id="GO:0004497">
    <property type="term" value="F:monooxygenase activity"/>
    <property type="evidence" value="ECO:0007669"/>
    <property type="project" value="UniProtKB-KW"/>
</dbReference>
<dbReference type="GO" id="GO:0016705">
    <property type="term" value="F:oxidoreductase activity, acting on paired donors, with incorporation or reduction of molecular oxygen"/>
    <property type="evidence" value="ECO:0007669"/>
    <property type="project" value="InterPro"/>
</dbReference>
<dbReference type="GO" id="GO:0009821">
    <property type="term" value="P:alkaloid biosynthetic process"/>
    <property type="evidence" value="ECO:0007669"/>
    <property type="project" value="UniProtKB-ARBA"/>
</dbReference>
<dbReference type="CDD" id="cd11072">
    <property type="entry name" value="CYP71-like"/>
    <property type="match status" value="1"/>
</dbReference>
<dbReference type="FunFam" id="1.10.630.10:FF:000043">
    <property type="entry name" value="Cytochrome P450 99A2"/>
    <property type="match status" value="1"/>
</dbReference>
<dbReference type="Gene3D" id="1.10.630.10">
    <property type="entry name" value="Cytochrome P450"/>
    <property type="match status" value="1"/>
</dbReference>
<dbReference type="InterPro" id="IPR001128">
    <property type="entry name" value="Cyt_P450"/>
</dbReference>
<dbReference type="InterPro" id="IPR017972">
    <property type="entry name" value="Cyt_P450_CS"/>
</dbReference>
<dbReference type="InterPro" id="IPR002401">
    <property type="entry name" value="Cyt_P450_E_grp-I"/>
</dbReference>
<dbReference type="InterPro" id="IPR036396">
    <property type="entry name" value="Cyt_P450_sf"/>
</dbReference>
<dbReference type="PANTHER" id="PTHR47955:SF8">
    <property type="entry name" value="CYTOCHROME P450 71D11-LIKE"/>
    <property type="match status" value="1"/>
</dbReference>
<dbReference type="PANTHER" id="PTHR47955">
    <property type="entry name" value="CYTOCHROME P450 FAMILY 71 PROTEIN"/>
    <property type="match status" value="1"/>
</dbReference>
<dbReference type="Pfam" id="PF00067">
    <property type="entry name" value="p450"/>
    <property type="match status" value="1"/>
</dbReference>
<dbReference type="PRINTS" id="PR00463">
    <property type="entry name" value="EP450I"/>
</dbReference>
<dbReference type="PRINTS" id="PR00385">
    <property type="entry name" value="P450"/>
</dbReference>
<dbReference type="SUPFAM" id="SSF48264">
    <property type="entry name" value="Cytochrome P450"/>
    <property type="match status" value="1"/>
</dbReference>
<dbReference type="PROSITE" id="PS00086">
    <property type="entry name" value="CYTOCHROME_P450"/>
    <property type="match status" value="1"/>
</dbReference>
<reference key="1">
    <citation type="journal article" date="2014" name="Nat. Commun.">
        <title>The seco-iridoid pathway from Catharanthus roseus.</title>
        <authorList>
            <person name="Miettinen K."/>
            <person name="Dong L."/>
            <person name="Navrot N."/>
            <person name="Schneider T."/>
            <person name="Burlat V."/>
            <person name="Pollier J."/>
            <person name="Woittiez L."/>
            <person name="van der Krol S."/>
            <person name="Lugan R."/>
            <person name="Ilc T."/>
            <person name="Verpoorte R."/>
            <person name="Oksman-Caldentey K.M."/>
            <person name="Martinoia E."/>
            <person name="Bouwmeester H."/>
            <person name="Goossens A."/>
            <person name="Memelink J."/>
            <person name="Werck-Reichhart D."/>
        </authorList>
    </citation>
    <scope>NUCLEOTIDE SEQUENCE [MRNA]</scope>
    <source>
        <strain>cv. Little Bright Eyes</strain>
    </source>
</reference>
<protein>
    <recommendedName>
        <fullName evidence="4">Cytochrome P450 71BT1</fullName>
        <shortName evidence="4">CrCYP71BT1</shortName>
        <ecNumber evidence="5">1.14.-.-</ecNumber>
    </recommendedName>
</protein>
<name>CYBT1_CATRO</name>
<evidence type="ECO:0000250" key="1">
    <source>
        <dbReference type="UniProtKB" id="P04798"/>
    </source>
</evidence>
<evidence type="ECO:0000255" key="2"/>
<evidence type="ECO:0000255" key="3">
    <source>
        <dbReference type="PROSITE-ProRule" id="PRU00498"/>
    </source>
</evidence>
<evidence type="ECO:0000303" key="4">
    <source>
    </source>
</evidence>
<evidence type="ECO:0000305" key="5"/>
<comment type="similarity">
    <text evidence="5">Belongs to the cytochrome P450 family.</text>
</comment>
<comment type="online information" name="ORCAE database">
    <link uri="https://orcae.psb.ugent.be/taxa/catro/regular/v1/"/>
</comment>
<accession>W8JCE8</accession>
<feature type="signal peptide" evidence="2">
    <location>
        <begin position="1"/>
        <end position="24"/>
    </location>
</feature>
<feature type="chain" id="PRO_0000446414" description="Cytochrome P450 71BT1">
    <location>
        <begin position="25"/>
        <end position="512"/>
    </location>
</feature>
<feature type="binding site" description="axial binding residue" evidence="1">
    <location>
        <position position="447"/>
    </location>
    <ligand>
        <name>heme</name>
        <dbReference type="ChEBI" id="CHEBI:30413"/>
    </ligand>
    <ligandPart>
        <name>Fe</name>
        <dbReference type="ChEBI" id="CHEBI:18248"/>
    </ligandPart>
</feature>
<feature type="glycosylation site" description="N-linked (GlcNAc...) asparagine" evidence="3">
    <location>
        <position position="111"/>
    </location>
</feature>
<feature type="glycosylation site" description="N-linked (GlcNAc...) asparagine" evidence="3">
    <location>
        <position position="168"/>
    </location>
</feature>